<reference key="1">
    <citation type="journal article" date="1986" name="J. Bacteriol.">
        <title>Isolation and nucleotide sequence analysis of the ferredoxin I gene from the cyanobacterium Anacystis nidulans R2.</title>
        <authorList>
            <person name="Reith M.E."/>
            <person name="Laudenbach D.E."/>
            <person name="Straus N.A."/>
        </authorList>
    </citation>
    <scope>NUCLEOTIDE SEQUENCE [GENOMIC DNA]</scope>
</reference>
<reference key="2">
    <citation type="journal article" date="1986" name="Nucleic Acids Res.">
        <title>Coding sequence of a ferredoxin gene from Anacystis nidulans R2 (Synechococcus PCC7942).</title>
        <authorList>
            <person name="van der Plas J."/>
            <person name="de Groot R.P."/>
            <person name="Woortman M.R."/>
            <person name="Weisbeek P.J."/>
            <person name="van Arkel G.A."/>
        </authorList>
    </citation>
    <scope>NUCLEOTIDE SEQUENCE [GENOMIC DNA]</scope>
</reference>
<reference key="3">
    <citation type="journal article" date="1988" name="Photosyn. Res.">
        <title>Genes encoding ferredoxins from Anabaena sp. PCC 7937 and Synechococcus sp. PCC 7942: structure and regulation.</title>
        <authorList>
            <person name="van der Plas J."/>
            <person name="de Groot R.P."/>
            <person name="Woortman M.R."/>
            <person name="Cremers F."/>
            <person name="Borrias M."/>
            <person name="van Arkel G.A."/>
            <person name="Weisbeek P.J."/>
        </authorList>
    </citation>
    <scope>NUCLEOTIDE SEQUENCE [GENOMIC DNA]</scope>
</reference>
<reference key="4">
    <citation type="submission" date="2005-08" db="EMBL/GenBank/DDBJ databases">
        <title>Complete sequence of chromosome 1 of Synechococcus elongatus PCC 7942.</title>
        <authorList>
            <consortium name="US DOE Joint Genome Institute"/>
            <person name="Copeland A."/>
            <person name="Lucas S."/>
            <person name="Lapidus A."/>
            <person name="Barry K."/>
            <person name="Detter J.C."/>
            <person name="Glavina T."/>
            <person name="Hammon N."/>
            <person name="Israni S."/>
            <person name="Pitluck S."/>
            <person name="Schmutz J."/>
            <person name="Larimer F."/>
            <person name="Land M."/>
            <person name="Kyrpides N."/>
            <person name="Lykidis A."/>
            <person name="Golden S."/>
            <person name="Richardson P."/>
        </authorList>
    </citation>
    <scope>NUCLEOTIDE SEQUENCE [LARGE SCALE GENOMIC DNA]</scope>
    <source>
        <strain>ATCC 33912 / PCC 7942 / FACHB-805</strain>
    </source>
</reference>
<accession>P0A3D2</accession>
<accession>P06517</accession>
<accession>Q31N40</accession>
<dbReference type="EMBL" id="M14482">
    <property type="protein sequence ID" value="AAA22053.1"/>
    <property type="molecule type" value="Genomic_DNA"/>
</dbReference>
<dbReference type="EMBL" id="X06209">
    <property type="protein sequence ID" value="CAA29562.1"/>
    <property type="molecule type" value="Genomic_DNA"/>
</dbReference>
<dbReference type="EMBL" id="X14344">
    <property type="protein sequence ID" value="CAA32529.1"/>
    <property type="molecule type" value="Genomic_DNA"/>
</dbReference>
<dbReference type="EMBL" id="CP000100">
    <property type="protein sequence ID" value="ABB57529.1"/>
    <property type="molecule type" value="Genomic_DNA"/>
</dbReference>
<dbReference type="SMR" id="P0A3D2"/>
<dbReference type="STRING" id="1140.Synpcc7942_1499"/>
<dbReference type="PaxDb" id="1140-Synpcc7942_1499"/>
<dbReference type="KEGG" id="syf:Synpcc7942_1499"/>
<dbReference type="eggNOG" id="COG0633">
    <property type="taxonomic scope" value="Bacteria"/>
</dbReference>
<dbReference type="HOGENOM" id="CLU_082632_7_3_3"/>
<dbReference type="OrthoDB" id="462043at2"/>
<dbReference type="BioCyc" id="SYNEL:SYNPCC7942_1499-MONOMER"/>
<dbReference type="Proteomes" id="UP000889800">
    <property type="component" value="Chromosome"/>
</dbReference>
<dbReference type="GO" id="GO:0051537">
    <property type="term" value="F:2 iron, 2 sulfur cluster binding"/>
    <property type="evidence" value="ECO:0007669"/>
    <property type="project" value="UniProtKB-KW"/>
</dbReference>
<dbReference type="GO" id="GO:0009055">
    <property type="term" value="F:electron transfer activity"/>
    <property type="evidence" value="ECO:0007669"/>
    <property type="project" value="InterPro"/>
</dbReference>
<dbReference type="GO" id="GO:0046872">
    <property type="term" value="F:metal ion binding"/>
    <property type="evidence" value="ECO:0007669"/>
    <property type="project" value="UniProtKB-KW"/>
</dbReference>
<dbReference type="GO" id="GO:0022900">
    <property type="term" value="P:electron transport chain"/>
    <property type="evidence" value="ECO:0007669"/>
    <property type="project" value="InterPro"/>
</dbReference>
<dbReference type="CDD" id="cd00207">
    <property type="entry name" value="fer2"/>
    <property type="match status" value="1"/>
</dbReference>
<dbReference type="FunFam" id="3.10.20.30:FF:000014">
    <property type="entry name" value="Ferredoxin"/>
    <property type="match status" value="1"/>
</dbReference>
<dbReference type="Gene3D" id="3.10.20.30">
    <property type="match status" value="1"/>
</dbReference>
<dbReference type="InterPro" id="IPR036010">
    <property type="entry name" value="2Fe-2S_ferredoxin-like_sf"/>
</dbReference>
<dbReference type="InterPro" id="IPR001041">
    <property type="entry name" value="2Fe-2S_ferredoxin-type"/>
</dbReference>
<dbReference type="InterPro" id="IPR006058">
    <property type="entry name" value="2Fe2S_fd_BS"/>
</dbReference>
<dbReference type="InterPro" id="IPR012675">
    <property type="entry name" value="Beta-grasp_dom_sf"/>
</dbReference>
<dbReference type="InterPro" id="IPR010241">
    <property type="entry name" value="Fd_pln"/>
</dbReference>
<dbReference type="NCBIfam" id="TIGR02008">
    <property type="entry name" value="fdx_plant"/>
    <property type="match status" value="1"/>
</dbReference>
<dbReference type="PANTHER" id="PTHR43112">
    <property type="entry name" value="FERREDOXIN"/>
    <property type="match status" value="1"/>
</dbReference>
<dbReference type="PANTHER" id="PTHR43112:SF3">
    <property type="entry name" value="FERREDOXIN-2, CHLOROPLASTIC"/>
    <property type="match status" value="1"/>
</dbReference>
<dbReference type="Pfam" id="PF00111">
    <property type="entry name" value="Fer2"/>
    <property type="match status" value="1"/>
</dbReference>
<dbReference type="SUPFAM" id="SSF54292">
    <property type="entry name" value="2Fe-2S ferredoxin-like"/>
    <property type="match status" value="1"/>
</dbReference>
<dbReference type="PROSITE" id="PS00197">
    <property type="entry name" value="2FE2S_FER_1"/>
    <property type="match status" value="1"/>
</dbReference>
<dbReference type="PROSITE" id="PS51085">
    <property type="entry name" value="2FE2S_FER_2"/>
    <property type="match status" value="1"/>
</dbReference>
<feature type="initiator methionine" description="Removed" evidence="1">
    <location>
        <position position="1"/>
    </location>
</feature>
<feature type="chain" id="PRO_0000189380" description="Ferredoxin-1">
    <location>
        <begin position="2"/>
        <end position="99"/>
    </location>
</feature>
<feature type="domain" description="2Fe-2S ferredoxin-type" evidence="2">
    <location>
        <begin position="4"/>
        <end position="96"/>
    </location>
</feature>
<feature type="binding site" evidence="2">
    <location>
        <position position="42"/>
    </location>
    <ligand>
        <name>[2Fe-2S] cluster</name>
        <dbReference type="ChEBI" id="CHEBI:190135"/>
    </ligand>
</feature>
<feature type="binding site" evidence="2">
    <location>
        <position position="47"/>
    </location>
    <ligand>
        <name>[2Fe-2S] cluster</name>
        <dbReference type="ChEBI" id="CHEBI:190135"/>
    </ligand>
</feature>
<feature type="binding site" evidence="2">
    <location>
        <position position="50"/>
    </location>
    <ligand>
        <name>[2Fe-2S] cluster</name>
        <dbReference type="ChEBI" id="CHEBI:190135"/>
    </ligand>
</feature>
<feature type="binding site" evidence="2">
    <location>
        <position position="80"/>
    </location>
    <ligand>
        <name>[2Fe-2S] cluster</name>
        <dbReference type="ChEBI" id="CHEBI:190135"/>
    </ligand>
</feature>
<evidence type="ECO:0000250" key="1"/>
<evidence type="ECO:0000255" key="2">
    <source>
        <dbReference type="PROSITE-ProRule" id="PRU00465"/>
    </source>
</evidence>
<evidence type="ECO:0000305" key="3"/>
<gene>
    <name type="primary">petF</name>
    <name type="ordered locus">Synpcc7942_1499</name>
</gene>
<organism>
    <name type="scientific">Synechococcus elongatus (strain ATCC 33912 / PCC 7942 / FACHB-805)</name>
    <name type="common">Anacystis nidulans R2</name>
    <dbReference type="NCBI Taxonomy" id="1140"/>
    <lineage>
        <taxon>Bacteria</taxon>
        <taxon>Bacillati</taxon>
        <taxon>Cyanobacteriota</taxon>
        <taxon>Cyanophyceae</taxon>
        <taxon>Synechococcales</taxon>
        <taxon>Synechococcaceae</taxon>
        <taxon>Synechococcus</taxon>
    </lineage>
</organism>
<protein>
    <recommendedName>
        <fullName>Ferredoxin-1</fullName>
    </recommendedName>
    <alternativeName>
        <fullName>Ferredoxin I</fullName>
    </alternativeName>
</protein>
<keyword id="KW-0001">2Fe-2S</keyword>
<keyword id="KW-0249">Electron transport</keyword>
<keyword id="KW-0408">Iron</keyword>
<keyword id="KW-0411">Iron-sulfur</keyword>
<keyword id="KW-0479">Metal-binding</keyword>
<keyword id="KW-1185">Reference proteome</keyword>
<keyword id="KW-0813">Transport</keyword>
<proteinExistence type="inferred from homology"/>
<comment type="function">
    <text>Ferredoxins are iron-sulfur proteins that transfer electrons in a wide variety of metabolic reactions.</text>
</comment>
<comment type="cofactor">
    <cofactor>
        <name>[2Fe-2S] cluster</name>
        <dbReference type="ChEBI" id="CHEBI:190135"/>
    </cofactor>
    <text>Binds 1 [2Fe-2S] cluster.</text>
</comment>
<comment type="subunit">
    <text evidence="1">Forms a complex with heterodimeric ferredoxin-thioredoxin reductase (FTR) and thioredoxin.</text>
</comment>
<comment type="similarity">
    <text evidence="3">Belongs to the 2Fe2S plant-type ferredoxin family.</text>
</comment>
<name>FER1_SYNE7</name>
<sequence>MATYKVTLVNAAEGLNTTIDVADDTYILDAAEEQGIDLPYSCRAGACSTCAGKVVSGTVDQSDQSFLDDDQIAAGFVLTCVAYPTSDVTIETHKEEDLY</sequence>